<protein>
    <recommendedName>
        <fullName evidence="1">dITP/XTP pyrophosphatase</fullName>
        <ecNumber evidence="1">3.6.1.66</ecNumber>
    </recommendedName>
    <alternativeName>
        <fullName evidence="1">Non-canonical purine NTP pyrophosphatase</fullName>
    </alternativeName>
    <alternativeName>
        <fullName evidence="1">Non-standard purine NTP pyrophosphatase</fullName>
    </alternativeName>
    <alternativeName>
        <fullName evidence="1">Nucleoside-triphosphate diphosphatase</fullName>
    </alternativeName>
    <alternativeName>
        <fullName evidence="1">Nucleoside-triphosphate pyrophosphatase</fullName>
        <shortName evidence="1">NTPase</shortName>
    </alternativeName>
</protein>
<evidence type="ECO:0000255" key="1">
    <source>
        <dbReference type="HAMAP-Rule" id="MF_01405"/>
    </source>
</evidence>
<evidence type="ECO:0000305" key="2"/>
<comment type="function">
    <text evidence="1">Pyrophosphatase that catalyzes the hydrolysis of nucleoside triphosphates to their monophosphate derivatives, with a high preference for the non-canonical purine nucleotides XTP (xanthosine triphosphate), dITP (deoxyinosine triphosphate) and ITP. Seems to function as a house-cleaning enzyme that removes non-canonical purine nucleotides from the nucleotide pool, thus preventing their incorporation into DNA/RNA and avoiding chromosomal lesions.</text>
</comment>
<comment type="catalytic activity">
    <reaction evidence="1">
        <text>XTP + H2O = XMP + diphosphate + H(+)</text>
        <dbReference type="Rhea" id="RHEA:28610"/>
        <dbReference type="ChEBI" id="CHEBI:15377"/>
        <dbReference type="ChEBI" id="CHEBI:15378"/>
        <dbReference type="ChEBI" id="CHEBI:33019"/>
        <dbReference type="ChEBI" id="CHEBI:57464"/>
        <dbReference type="ChEBI" id="CHEBI:61314"/>
        <dbReference type="EC" id="3.6.1.66"/>
    </reaction>
</comment>
<comment type="catalytic activity">
    <reaction evidence="1">
        <text>dITP + H2O = dIMP + diphosphate + H(+)</text>
        <dbReference type="Rhea" id="RHEA:28342"/>
        <dbReference type="ChEBI" id="CHEBI:15377"/>
        <dbReference type="ChEBI" id="CHEBI:15378"/>
        <dbReference type="ChEBI" id="CHEBI:33019"/>
        <dbReference type="ChEBI" id="CHEBI:61194"/>
        <dbReference type="ChEBI" id="CHEBI:61382"/>
        <dbReference type="EC" id="3.6.1.66"/>
    </reaction>
</comment>
<comment type="catalytic activity">
    <reaction evidence="1">
        <text>ITP + H2O = IMP + diphosphate + H(+)</text>
        <dbReference type="Rhea" id="RHEA:29399"/>
        <dbReference type="ChEBI" id="CHEBI:15377"/>
        <dbReference type="ChEBI" id="CHEBI:15378"/>
        <dbReference type="ChEBI" id="CHEBI:33019"/>
        <dbReference type="ChEBI" id="CHEBI:58053"/>
        <dbReference type="ChEBI" id="CHEBI:61402"/>
        <dbReference type="EC" id="3.6.1.66"/>
    </reaction>
</comment>
<comment type="cofactor">
    <cofactor evidence="1">
        <name>Mg(2+)</name>
        <dbReference type="ChEBI" id="CHEBI:18420"/>
    </cofactor>
    <text evidence="1">Binds 1 Mg(2+) ion per subunit.</text>
</comment>
<comment type="subunit">
    <text evidence="1">Homodimer.</text>
</comment>
<comment type="similarity">
    <text evidence="1">Belongs to the HAM1 NTPase family.</text>
</comment>
<comment type="sequence caution" evidence="2">
    <conflict type="erroneous initiation">
        <sequence resource="EMBL-CDS" id="CAG21463"/>
    </conflict>
</comment>
<keyword id="KW-0378">Hydrolase</keyword>
<keyword id="KW-0460">Magnesium</keyword>
<keyword id="KW-0479">Metal-binding</keyword>
<keyword id="KW-0546">Nucleotide metabolism</keyword>
<keyword id="KW-0547">Nucleotide-binding</keyword>
<keyword id="KW-1185">Reference proteome</keyword>
<name>IXTPA_PHOPR</name>
<gene>
    <name type="ordered locus">PBPRA3148</name>
</gene>
<dbReference type="EC" id="3.6.1.66" evidence="1"/>
<dbReference type="EMBL" id="CR378673">
    <property type="protein sequence ID" value="CAG21463.1"/>
    <property type="status" value="ALT_INIT"/>
    <property type="molecule type" value="Genomic_DNA"/>
</dbReference>
<dbReference type="RefSeq" id="WP_011219718.1">
    <property type="nucleotide sequence ID" value="NC_006370.1"/>
</dbReference>
<dbReference type="SMR" id="Q6LML4"/>
<dbReference type="STRING" id="298386.PBPRA3148"/>
<dbReference type="KEGG" id="ppr:PBPRA3148"/>
<dbReference type="eggNOG" id="COG0127">
    <property type="taxonomic scope" value="Bacteria"/>
</dbReference>
<dbReference type="HOGENOM" id="CLU_082080_0_3_6"/>
<dbReference type="Proteomes" id="UP000000593">
    <property type="component" value="Chromosome 1"/>
</dbReference>
<dbReference type="GO" id="GO:0005829">
    <property type="term" value="C:cytosol"/>
    <property type="evidence" value="ECO:0007669"/>
    <property type="project" value="TreeGrafter"/>
</dbReference>
<dbReference type="GO" id="GO:0035870">
    <property type="term" value="F:dITP diphosphatase activity"/>
    <property type="evidence" value="ECO:0007669"/>
    <property type="project" value="RHEA"/>
</dbReference>
<dbReference type="GO" id="GO:0036220">
    <property type="term" value="F:ITP diphosphatase activity"/>
    <property type="evidence" value="ECO:0007669"/>
    <property type="project" value="UniProtKB-EC"/>
</dbReference>
<dbReference type="GO" id="GO:0046872">
    <property type="term" value="F:metal ion binding"/>
    <property type="evidence" value="ECO:0007669"/>
    <property type="project" value="UniProtKB-KW"/>
</dbReference>
<dbReference type="GO" id="GO:0000166">
    <property type="term" value="F:nucleotide binding"/>
    <property type="evidence" value="ECO:0007669"/>
    <property type="project" value="UniProtKB-KW"/>
</dbReference>
<dbReference type="GO" id="GO:0017111">
    <property type="term" value="F:ribonucleoside triphosphate phosphatase activity"/>
    <property type="evidence" value="ECO:0007669"/>
    <property type="project" value="InterPro"/>
</dbReference>
<dbReference type="GO" id="GO:0036222">
    <property type="term" value="F:XTP diphosphatase activity"/>
    <property type="evidence" value="ECO:0007669"/>
    <property type="project" value="RHEA"/>
</dbReference>
<dbReference type="GO" id="GO:0009117">
    <property type="term" value="P:nucleotide metabolic process"/>
    <property type="evidence" value="ECO:0007669"/>
    <property type="project" value="UniProtKB-KW"/>
</dbReference>
<dbReference type="GO" id="GO:0009146">
    <property type="term" value="P:purine nucleoside triphosphate catabolic process"/>
    <property type="evidence" value="ECO:0007669"/>
    <property type="project" value="UniProtKB-UniRule"/>
</dbReference>
<dbReference type="CDD" id="cd00515">
    <property type="entry name" value="HAM1"/>
    <property type="match status" value="1"/>
</dbReference>
<dbReference type="FunFam" id="3.90.950.10:FF:000001">
    <property type="entry name" value="dITP/XTP pyrophosphatase"/>
    <property type="match status" value="1"/>
</dbReference>
<dbReference type="Gene3D" id="3.90.950.10">
    <property type="match status" value="1"/>
</dbReference>
<dbReference type="HAMAP" id="MF_01405">
    <property type="entry name" value="Non_canon_purine_NTPase"/>
    <property type="match status" value="1"/>
</dbReference>
<dbReference type="InterPro" id="IPR020922">
    <property type="entry name" value="dITP/XTP_pyrophosphatase"/>
</dbReference>
<dbReference type="InterPro" id="IPR029001">
    <property type="entry name" value="ITPase-like_fam"/>
</dbReference>
<dbReference type="InterPro" id="IPR002637">
    <property type="entry name" value="RdgB/HAM1"/>
</dbReference>
<dbReference type="NCBIfam" id="NF011397">
    <property type="entry name" value="PRK14822.1"/>
    <property type="match status" value="1"/>
</dbReference>
<dbReference type="NCBIfam" id="TIGR00042">
    <property type="entry name" value="RdgB/HAM1 family non-canonical purine NTP pyrophosphatase"/>
    <property type="match status" value="1"/>
</dbReference>
<dbReference type="PANTHER" id="PTHR11067:SF9">
    <property type="entry name" value="INOSINE TRIPHOSPHATE PYROPHOSPHATASE"/>
    <property type="match status" value="1"/>
</dbReference>
<dbReference type="PANTHER" id="PTHR11067">
    <property type="entry name" value="INOSINE TRIPHOSPHATE PYROPHOSPHATASE/HAM1 PROTEIN"/>
    <property type="match status" value="1"/>
</dbReference>
<dbReference type="Pfam" id="PF01725">
    <property type="entry name" value="Ham1p_like"/>
    <property type="match status" value="1"/>
</dbReference>
<dbReference type="SUPFAM" id="SSF52972">
    <property type="entry name" value="ITPase-like"/>
    <property type="match status" value="1"/>
</dbReference>
<proteinExistence type="inferred from homology"/>
<reference key="1">
    <citation type="journal article" date="2005" name="Science">
        <title>Life at depth: Photobacterium profundum genome sequence and expression analysis.</title>
        <authorList>
            <person name="Vezzi A."/>
            <person name="Campanaro S."/>
            <person name="D'Angelo M."/>
            <person name="Simonato F."/>
            <person name="Vitulo N."/>
            <person name="Lauro F.M."/>
            <person name="Cestaro A."/>
            <person name="Malacrida G."/>
            <person name="Simionati B."/>
            <person name="Cannata N."/>
            <person name="Romualdi C."/>
            <person name="Bartlett D.H."/>
            <person name="Valle G."/>
        </authorList>
    </citation>
    <scope>NUCLEOTIDE SEQUENCE [LARGE SCALE GENOMIC DNA]</scope>
    <source>
        <strain>ATCC BAA-1253 / SS9</strain>
    </source>
</reference>
<sequence>MSKLVLATGNQGKVKEMASLLADFGFDVVAQSDFNVSSVAETGTTFIENAIIKARHAAKETGLPAIADDSGLEVDFLQGAPGIYSARFAGEDATDQQNLEKLLADMEGVPAEQRTARFHCVLVMMRHENDPTPLVCHGSWEGSILTQAQGENGFGYDPVFWVPEDQCASAQLESPRKKELSHRGKALQKLFAALKDA</sequence>
<feature type="chain" id="PRO_0000178207" description="dITP/XTP pyrophosphatase">
    <location>
        <begin position="1"/>
        <end position="197"/>
    </location>
</feature>
<feature type="active site" description="Proton acceptor" evidence="1">
    <location>
        <position position="69"/>
    </location>
</feature>
<feature type="binding site" evidence="1">
    <location>
        <begin position="8"/>
        <end position="13"/>
    </location>
    <ligand>
        <name>substrate</name>
    </ligand>
</feature>
<feature type="binding site" evidence="1">
    <location>
        <position position="69"/>
    </location>
    <ligand>
        <name>Mg(2+)</name>
        <dbReference type="ChEBI" id="CHEBI:18420"/>
    </ligand>
</feature>
<feature type="binding site" evidence="1">
    <location>
        <position position="70"/>
    </location>
    <ligand>
        <name>substrate</name>
    </ligand>
</feature>
<feature type="binding site" evidence="1">
    <location>
        <begin position="154"/>
        <end position="157"/>
    </location>
    <ligand>
        <name>substrate</name>
    </ligand>
</feature>
<feature type="binding site" evidence="1">
    <location>
        <position position="177"/>
    </location>
    <ligand>
        <name>substrate</name>
    </ligand>
</feature>
<feature type="binding site" evidence="1">
    <location>
        <begin position="182"/>
        <end position="183"/>
    </location>
    <ligand>
        <name>substrate</name>
    </ligand>
</feature>
<accession>Q6LML4</accession>
<organism>
    <name type="scientific">Photobacterium profundum (strain SS9)</name>
    <dbReference type="NCBI Taxonomy" id="298386"/>
    <lineage>
        <taxon>Bacteria</taxon>
        <taxon>Pseudomonadati</taxon>
        <taxon>Pseudomonadota</taxon>
        <taxon>Gammaproteobacteria</taxon>
        <taxon>Vibrionales</taxon>
        <taxon>Vibrionaceae</taxon>
        <taxon>Photobacterium</taxon>
    </lineage>
</organism>